<feature type="transit peptide" description="Mitochondrion" evidence="1">
    <location>
        <begin position="1"/>
        <end position="36"/>
    </location>
</feature>
<feature type="chain" id="PRO_0000026732" description="Lon protease homolog, mitochondrial">
    <location>
        <begin position="37"/>
        <end position="1067"/>
    </location>
</feature>
<feature type="domain" description="Lon N-terminal" evidence="3">
    <location>
        <begin position="162"/>
        <end position="425"/>
    </location>
</feature>
<feature type="domain" description="Lon proteolytic" evidence="2">
    <location>
        <begin position="854"/>
        <end position="1040"/>
    </location>
</feature>
<feature type="region of interest" description="Disordered" evidence="4">
    <location>
        <begin position="55"/>
        <end position="142"/>
    </location>
</feature>
<feature type="region of interest" description="Disordered" evidence="4">
    <location>
        <begin position="262"/>
        <end position="314"/>
    </location>
</feature>
<feature type="region of interest" description="Disordered" evidence="4">
    <location>
        <begin position="791"/>
        <end position="820"/>
    </location>
</feature>
<feature type="compositionally biased region" description="Basic and acidic residues" evidence="4">
    <location>
        <begin position="55"/>
        <end position="82"/>
    </location>
</feature>
<feature type="compositionally biased region" description="Acidic residues" evidence="4">
    <location>
        <begin position="128"/>
        <end position="139"/>
    </location>
</feature>
<feature type="compositionally biased region" description="Basic and acidic residues" evidence="4">
    <location>
        <begin position="293"/>
        <end position="311"/>
    </location>
</feature>
<feature type="active site" evidence="1">
    <location>
        <position position="946"/>
    </location>
</feature>
<feature type="active site" evidence="1">
    <location>
        <position position="989"/>
    </location>
</feature>
<feature type="binding site" evidence="1">
    <location>
        <begin position="578"/>
        <end position="585"/>
    </location>
    <ligand>
        <name>ATP</name>
        <dbReference type="ChEBI" id="CHEBI:30616"/>
    </ligand>
</feature>
<protein>
    <recommendedName>
        <fullName evidence="1">Lon protease homolog, mitochondrial</fullName>
        <ecNumber evidence="1">3.4.21.53</ecNumber>
    </recommendedName>
</protein>
<organism>
    <name type="scientific">Schizosaccharomyces pombe (strain 972 / ATCC 24843)</name>
    <name type="common">Fission yeast</name>
    <dbReference type="NCBI Taxonomy" id="284812"/>
    <lineage>
        <taxon>Eukaryota</taxon>
        <taxon>Fungi</taxon>
        <taxon>Dikarya</taxon>
        <taxon>Ascomycota</taxon>
        <taxon>Taphrinomycotina</taxon>
        <taxon>Schizosaccharomycetes</taxon>
        <taxon>Schizosaccharomycetales</taxon>
        <taxon>Schizosaccharomycetaceae</taxon>
        <taxon>Schizosaccharomyces</taxon>
    </lineage>
</organism>
<reference key="1">
    <citation type="journal article" date="2002" name="Nature">
        <title>The genome sequence of Schizosaccharomyces pombe.</title>
        <authorList>
            <person name="Wood V."/>
            <person name="Gwilliam R."/>
            <person name="Rajandream M.A."/>
            <person name="Lyne M.H."/>
            <person name="Lyne R."/>
            <person name="Stewart A."/>
            <person name="Sgouros J.G."/>
            <person name="Peat N."/>
            <person name="Hayles J."/>
            <person name="Baker S.G."/>
            <person name="Basham D."/>
            <person name="Bowman S."/>
            <person name="Brooks K."/>
            <person name="Brown D."/>
            <person name="Brown S."/>
            <person name="Chillingworth T."/>
            <person name="Churcher C.M."/>
            <person name="Collins M."/>
            <person name="Connor R."/>
            <person name="Cronin A."/>
            <person name="Davis P."/>
            <person name="Feltwell T."/>
            <person name="Fraser A."/>
            <person name="Gentles S."/>
            <person name="Goble A."/>
            <person name="Hamlin N."/>
            <person name="Harris D.E."/>
            <person name="Hidalgo J."/>
            <person name="Hodgson G."/>
            <person name="Holroyd S."/>
            <person name="Hornsby T."/>
            <person name="Howarth S."/>
            <person name="Huckle E.J."/>
            <person name="Hunt S."/>
            <person name="Jagels K."/>
            <person name="James K.D."/>
            <person name="Jones L."/>
            <person name="Jones M."/>
            <person name="Leather S."/>
            <person name="McDonald S."/>
            <person name="McLean J."/>
            <person name="Mooney P."/>
            <person name="Moule S."/>
            <person name="Mungall K.L."/>
            <person name="Murphy L.D."/>
            <person name="Niblett D."/>
            <person name="Odell C."/>
            <person name="Oliver K."/>
            <person name="O'Neil S."/>
            <person name="Pearson D."/>
            <person name="Quail M.A."/>
            <person name="Rabbinowitsch E."/>
            <person name="Rutherford K.M."/>
            <person name="Rutter S."/>
            <person name="Saunders D."/>
            <person name="Seeger K."/>
            <person name="Sharp S."/>
            <person name="Skelton J."/>
            <person name="Simmonds M.N."/>
            <person name="Squares R."/>
            <person name="Squares S."/>
            <person name="Stevens K."/>
            <person name="Taylor K."/>
            <person name="Taylor R.G."/>
            <person name="Tivey A."/>
            <person name="Walsh S.V."/>
            <person name="Warren T."/>
            <person name="Whitehead S."/>
            <person name="Woodward J.R."/>
            <person name="Volckaert G."/>
            <person name="Aert R."/>
            <person name="Robben J."/>
            <person name="Grymonprez B."/>
            <person name="Weltjens I."/>
            <person name="Vanstreels E."/>
            <person name="Rieger M."/>
            <person name="Schaefer M."/>
            <person name="Mueller-Auer S."/>
            <person name="Gabel C."/>
            <person name="Fuchs M."/>
            <person name="Duesterhoeft A."/>
            <person name="Fritzc C."/>
            <person name="Holzer E."/>
            <person name="Moestl D."/>
            <person name="Hilbert H."/>
            <person name="Borzym K."/>
            <person name="Langer I."/>
            <person name="Beck A."/>
            <person name="Lehrach H."/>
            <person name="Reinhardt R."/>
            <person name="Pohl T.M."/>
            <person name="Eger P."/>
            <person name="Zimmermann W."/>
            <person name="Wedler H."/>
            <person name="Wambutt R."/>
            <person name="Purnelle B."/>
            <person name="Goffeau A."/>
            <person name="Cadieu E."/>
            <person name="Dreano S."/>
            <person name="Gloux S."/>
            <person name="Lelaure V."/>
            <person name="Mottier S."/>
            <person name="Galibert F."/>
            <person name="Aves S.J."/>
            <person name="Xiang Z."/>
            <person name="Hunt C."/>
            <person name="Moore K."/>
            <person name="Hurst S.M."/>
            <person name="Lucas M."/>
            <person name="Rochet M."/>
            <person name="Gaillardin C."/>
            <person name="Tallada V.A."/>
            <person name="Garzon A."/>
            <person name="Thode G."/>
            <person name="Daga R.R."/>
            <person name="Cruzado L."/>
            <person name="Jimenez J."/>
            <person name="Sanchez M."/>
            <person name="del Rey F."/>
            <person name="Benito J."/>
            <person name="Dominguez A."/>
            <person name="Revuelta J.L."/>
            <person name="Moreno S."/>
            <person name="Armstrong J."/>
            <person name="Forsburg S.L."/>
            <person name="Cerutti L."/>
            <person name="Lowe T."/>
            <person name="McCombie W.R."/>
            <person name="Paulsen I."/>
            <person name="Potashkin J."/>
            <person name="Shpakovski G.V."/>
            <person name="Ussery D."/>
            <person name="Barrell B.G."/>
            <person name="Nurse P."/>
        </authorList>
    </citation>
    <scope>NUCLEOTIDE SEQUENCE [LARGE SCALE GENOMIC DNA]</scope>
    <source>
        <strain>972 / ATCC 24843</strain>
    </source>
</reference>
<reference key="2">
    <citation type="journal article" date="2006" name="Nat. Biotechnol.">
        <title>ORFeome cloning and global analysis of protein localization in the fission yeast Schizosaccharomyces pombe.</title>
        <authorList>
            <person name="Matsuyama A."/>
            <person name="Arai R."/>
            <person name="Yashiroda Y."/>
            <person name="Shirai A."/>
            <person name="Kamata A."/>
            <person name="Sekido S."/>
            <person name="Kobayashi Y."/>
            <person name="Hashimoto A."/>
            <person name="Hamamoto M."/>
            <person name="Hiraoka Y."/>
            <person name="Horinouchi S."/>
            <person name="Yoshida M."/>
        </authorList>
    </citation>
    <scope>SUBCELLULAR LOCATION [LARGE SCALE ANALYSIS]</scope>
</reference>
<accession>Q09769</accession>
<sequence>MITRLSGACLRRSGAKRNWPREHLVHRSLLASFSTTQRVLKCSVGPFRTSNVVFKSKEPKDNKPLDNKNDPKKTHNEDESHTNESLPSTDKKKKKDNDDFKQNLKSSSNKTEEKYSATQASKSKNDEFELGGEENEDEMPLNGEFNKNVPAKYSVPDVYPQLLALPIARRPLFPGFYKAIVTKNPSVSEAIKELIKKRQPYIGAFLLKDENTDTDVITNIDQVYPVGVFAQITSIFPAKSGSEPALTAVLYPHRRIRITELIPPKEDADSAASSDAAELETDKSSNLSSNGEVKSDLKQDNGKEEPEKEVESTPSILQNFKVSLVNVENVPNEPFKRQDPVIKAVTSEIMNVFKDIANVSPLFREQIANFSISQTSGNVFDEPAKLADFAAAVSAADHRELQEVLEATNIGDRLQKALYVLKKELLNAQLQHKINKEIEQKITQRHKEYLLTEQLKQIKRELGQELDSKEALVTEFKKRTESLSMPDHVKKVFNDELSKFQHLEPMAAEFNITRNYLDWITQLPWGKRSVENFDLDHAKEVLDRDHYGLKDVKDRVLELVAVGKLRGTMQGKIMCLVGPPGVGKTSVGKSIASALNREFFRFSVGGLTDVAEIKGHRRTYIGAMPGKIVQALKKVQTENPLILIDEIDKVGKSHQGDPASALLELLDSEQNSAFLDYYMDIPLDVSSVLFVCTANTIDTIPPPLLDRMEVIELSGYVSAEKVNIAKGYLIPQAKAACGLKDANVNISDDAIKGLISYYAHESGVRNLKKSIEKIFRKTSFSIVKEIDDELNSKEKSTGKSGKKTSPQSSEDAANKEASSVPLKVPDKVNIEIEEKDLTKYLGPPIYTSQRLYDTTPPGVVMGLGWTPMGGVSMYVETIVKNILSSNSTPSLERTGQLGDVMKESSEISYSFSKSFLSKHFPNNKFFEHARLHMHCPEGSISKDGPSAGITMATSLLSLALDTPVPATTAMTGELTLTGKILRIGGLREKTVAAKLSGMKEILFPKSNLADWEQLPDYVKEGLTGVPVAWYDDVFKRVFSNIDAEKCNNLWPNLIKSSSKQHQISPSH</sequence>
<evidence type="ECO:0000255" key="1">
    <source>
        <dbReference type="HAMAP-Rule" id="MF_03120"/>
    </source>
</evidence>
<evidence type="ECO:0000255" key="2">
    <source>
        <dbReference type="PROSITE-ProRule" id="PRU01122"/>
    </source>
</evidence>
<evidence type="ECO:0000255" key="3">
    <source>
        <dbReference type="PROSITE-ProRule" id="PRU01123"/>
    </source>
</evidence>
<evidence type="ECO:0000256" key="4">
    <source>
        <dbReference type="SAM" id="MobiDB-lite"/>
    </source>
</evidence>
<evidence type="ECO:0000269" key="5">
    <source>
    </source>
</evidence>
<gene>
    <name type="primary">pim1</name>
    <name type="ORF">SPAC22F3.06c</name>
</gene>
<dbReference type="EC" id="3.4.21.53" evidence="1"/>
<dbReference type="EMBL" id="CU329670">
    <property type="protein sequence ID" value="CAA91071.1"/>
    <property type="molecule type" value="Genomic_DNA"/>
</dbReference>
<dbReference type="PIR" id="S62421">
    <property type="entry name" value="S62421"/>
</dbReference>
<dbReference type="SMR" id="Q09769"/>
<dbReference type="BioGRID" id="278365">
    <property type="interactions" value="32"/>
</dbReference>
<dbReference type="FunCoup" id="Q09769">
    <property type="interactions" value="304"/>
</dbReference>
<dbReference type="STRING" id="284812.Q09769"/>
<dbReference type="MEROPS" id="S16.010"/>
<dbReference type="iPTMnet" id="Q09769"/>
<dbReference type="PaxDb" id="4896-SPAC22F3.06c.1"/>
<dbReference type="EnsemblFungi" id="SPAC22F3.06c.1">
    <property type="protein sequence ID" value="SPAC22F3.06c.1:pep"/>
    <property type="gene ID" value="SPAC22F3.06c"/>
</dbReference>
<dbReference type="KEGG" id="spo:2541875"/>
<dbReference type="PomBase" id="SPAC22F3.06c"/>
<dbReference type="VEuPathDB" id="FungiDB:SPAC22F3.06c"/>
<dbReference type="eggNOG" id="KOG2004">
    <property type="taxonomic scope" value="Eukaryota"/>
</dbReference>
<dbReference type="HOGENOM" id="CLU_004109_1_0_1"/>
<dbReference type="InParanoid" id="Q09769"/>
<dbReference type="OMA" id="WLTNIPW"/>
<dbReference type="PhylomeDB" id="Q09769"/>
<dbReference type="Reactome" id="R-SPO-9837999">
    <property type="pathway name" value="Mitochondrial protein degradation"/>
</dbReference>
<dbReference type="PRO" id="PR:Q09769"/>
<dbReference type="Proteomes" id="UP000002485">
    <property type="component" value="Chromosome I"/>
</dbReference>
<dbReference type="GO" id="GO:0005759">
    <property type="term" value="C:mitochondrial matrix"/>
    <property type="evidence" value="ECO:0000318"/>
    <property type="project" value="GO_Central"/>
</dbReference>
<dbReference type="GO" id="GO:0005739">
    <property type="term" value="C:mitochondrion"/>
    <property type="evidence" value="ECO:0007005"/>
    <property type="project" value="PomBase"/>
</dbReference>
<dbReference type="GO" id="GO:0005524">
    <property type="term" value="F:ATP binding"/>
    <property type="evidence" value="ECO:0000250"/>
    <property type="project" value="PomBase"/>
</dbReference>
<dbReference type="GO" id="GO:0016887">
    <property type="term" value="F:ATP hydrolysis activity"/>
    <property type="evidence" value="ECO:0007669"/>
    <property type="project" value="UniProtKB-UniRule"/>
</dbReference>
<dbReference type="GO" id="GO:0004176">
    <property type="term" value="F:ATP-dependent peptidase activity"/>
    <property type="evidence" value="ECO:0000318"/>
    <property type="project" value="GO_Central"/>
</dbReference>
<dbReference type="GO" id="GO:0043565">
    <property type="term" value="F:sequence-specific DNA binding"/>
    <property type="evidence" value="ECO:0007669"/>
    <property type="project" value="UniProtKB-UniRule"/>
</dbReference>
<dbReference type="GO" id="GO:0004252">
    <property type="term" value="F:serine-type endopeptidase activity"/>
    <property type="evidence" value="ECO:0000255"/>
    <property type="project" value="PomBase"/>
</dbReference>
<dbReference type="GO" id="GO:0003697">
    <property type="term" value="F:single-stranded DNA binding"/>
    <property type="evidence" value="ECO:0000318"/>
    <property type="project" value="GO_Central"/>
</dbReference>
<dbReference type="GO" id="GO:0034599">
    <property type="term" value="P:cellular response to oxidative stress"/>
    <property type="evidence" value="ECO:0007669"/>
    <property type="project" value="UniProtKB-UniRule"/>
</dbReference>
<dbReference type="GO" id="GO:0051131">
    <property type="term" value="P:chaperone-mediated protein complex assembly"/>
    <property type="evidence" value="ECO:0000318"/>
    <property type="project" value="GO_Central"/>
</dbReference>
<dbReference type="GO" id="GO:0035694">
    <property type="term" value="P:mitochondrial protein catabolic process"/>
    <property type="evidence" value="ECO:0000316"/>
    <property type="project" value="PomBase"/>
</dbReference>
<dbReference type="GO" id="GO:0141164">
    <property type="term" value="P:mitochondrial protein quality control"/>
    <property type="evidence" value="ECO:0000304"/>
    <property type="project" value="PomBase"/>
</dbReference>
<dbReference type="GO" id="GO:0007005">
    <property type="term" value="P:mitochondrion organization"/>
    <property type="evidence" value="ECO:0000318"/>
    <property type="project" value="GO_Central"/>
</dbReference>
<dbReference type="GO" id="GO:0070407">
    <property type="term" value="P:oxidation-dependent protein catabolic process"/>
    <property type="evidence" value="ECO:0007669"/>
    <property type="project" value="UniProtKB-UniRule"/>
</dbReference>
<dbReference type="GO" id="GO:0006515">
    <property type="term" value="P:protein quality control for misfolded or incompletely synthesized proteins"/>
    <property type="evidence" value="ECO:0000318"/>
    <property type="project" value="GO_Central"/>
</dbReference>
<dbReference type="CDD" id="cd19500">
    <property type="entry name" value="RecA-like_Lon"/>
    <property type="match status" value="1"/>
</dbReference>
<dbReference type="FunFam" id="3.40.50.300:FF:000021">
    <property type="entry name" value="Lon protease homolog"/>
    <property type="match status" value="1"/>
</dbReference>
<dbReference type="FunFam" id="1.20.5.5270:FF:000001">
    <property type="entry name" value="Lon protease homolog, mitochondrial"/>
    <property type="match status" value="1"/>
</dbReference>
<dbReference type="FunFam" id="1.20.58.1480:FF:000002">
    <property type="entry name" value="Lon protease homolog, mitochondrial"/>
    <property type="match status" value="1"/>
</dbReference>
<dbReference type="FunFam" id="2.30.130.40:FF:000010">
    <property type="entry name" value="Lon protease homolog, mitochondrial"/>
    <property type="match status" value="1"/>
</dbReference>
<dbReference type="FunFam" id="3.30.230.10:FF:000015">
    <property type="entry name" value="Lon protease homolog, mitochondrial"/>
    <property type="match status" value="1"/>
</dbReference>
<dbReference type="Gene3D" id="1.10.8.60">
    <property type="match status" value="1"/>
</dbReference>
<dbReference type="Gene3D" id="1.20.5.5270">
    <property type="match status" value="1"/>
</dbReference>
<dbReference type="Gene3D" id="1.20.58.1480">
    <property type="match status" value="1"/>
</dbReference>
<dbReference type="Gene3D" id="3.30.230.10">
    <property type="match status" value="1"/>
</dbReference>
<dbReference type="Gene3D" id="2.30.130.40">
    <property type="entry name" value="LON domain-like"/>
    <property type="match status" value="1"/>
</dbReference>
<dbReference type="Gene3D" id="3.40.50.300">
    <property type="entry name" value="P-loop containing nucleotide triphosphate hydrolases"/>
    <property type="match status" value="1"/>
</dbReference>
<dbReference type="HAMAP" id="MF_03120">
    <property type="entry name" value="lonm_euk"/>
    <property type="match status" value="1"/>
</dbReference>
<dbReference type="InterPro" id="IPR003593">
    <property type="entry name" value="AAA+_ATPase"/>
</dbReference>
<dbReference type="InterPro" id="IPR003959">
    <property type="entry name" value="ATPase_AAA_core"/>
</dbReference>
<dbReference type="InterPro" id="IPR004815">
    <property type="entry name" value="Lon_bac/euk-typ"/>
</dbReference>
<dbReference type="InterPro" id="IPR054594">
    <property type="entry name" value="Lon_lid"/>
</dbReference>
<dbReference type="InterPro" id="IPR008269">
    <property type="entry name" value="Lon_proteolytic"/>
</dbReference>
<dbReference type="InterPro" id="IPR027065">
    <property type="entry name" value="Lon_Prtase"/>
</dbReference>
<dbReference type="InterPro" id="IPR003111">
    <property type="entry name" value="Lon_prtase_N"/>
</dbReference>
<dbReference type="InterPro" id="IPR046336">
    <property type="entry name" value="Lon_prtase_N_sf"/>
</dbReference>
<dbReference type="InterPro" id="IPR027503">
    <property type="entry name" value="Lonm_euk"/>
</dbReference>
<dbReference type="InterPro" id="IPR027417">
    <property type="entry name" value="P-loop_NTPase"/>
</dbReference>
<dbReference type="InterPro" id="IPR008268">
    <property type="entry name" value="Peptidase_S16_AS"/>
</dbReference>
<dbReference type="InterPro" id="IPR015947">
    <property type="entry name" value="PUA-like_sf"/>
</dbReference>
<dbReference type="InterPro" id="IPR020568">
    <property type="entry name" value="Ribosomal_Su5_D2-typ_SF"/>
</dbReference>
<dbReference type="InterPro" id="IPR014721">
    <property type="entry name" value="Ribsml_uS5_D2-typ_fold_subgr"/>
</dbReference>
<dbReference type="NCBIfam" id="TIGR00763">
    <property type="entry name" value="lon"/>
    <property type="match status" value="1"/>
</dbReference>
<dbReference type="PANTHER" id="PTHR43718">
    <property type="entry name" value="LON PROTEASE"/>
    <property type="match status" value="1"/>
</dbReference>
<dbReference type="PANTHER" id="PTHR43718:SF2">
    <property type="entry name" value="LON PROTEASE HOMOLOG, MITOCHONDRIAL"/>
    <property type="match status" value="1"/>
</dbReference>
<dbReference type="Pfam" id="PF00004">
    <property type="entry name" value="AAA"/>
    <property type="match status" value="1"/>
</dbReference>
<dbReference type="Pfam" id="PF05362">
    <property type="entry name" value="Lon_C"/>
    <property type="match status" value="1"/>
</dbReference>
<dbReference type="Pfam" id="PF22667">
    <property type="entry name" value="Lon_lid"/>
    <property type="match status" value="1"/>
</dbReference>
<dbReference type="Pfam" id="PF02190">
    <property type="entry name" value="LON_substr_bdg"/>
    <property type="match status" value="1"/>
</dbReference>
<dbReference type="PRINTS" id="PR00830">
    <property type="entry name" value="ENDOLAPTASE"/>
</dbReference>
<dbReference type="SMART" id="SM00382">
    <property type="entry name" value="AAA"/>
    <property type="match status" value="1"/>
</dbReference>
<dbReference type="SMART" id="SM00464">
    <property type="entry name" value="LON"/>
    <property type="match status" value="1"/>
</dbReference>
<dbReference type="SUPFAM" id="SSF52540">
    <property type="entry name" value="P-loop containing nucleoside triphosphate hydrolases"/>
    <property type="match status" value="1"/>
</dbReference>
<dbReference type="SUPFAM" id="SSF88697">
    <property type="entry name" value="PUA domain-like"/>
    <property type="match status" value="1"/>
</dbReference>
<dbReference type="SUPFAM" id="SSF54211">
    <property type="entry name" value="Ribosomal protein S5 domain 2-like"/>
    <property type="match status" value="1"/>
</dbReference>
<dbReference type="PROSITE" id="PS51787">
    <property type="entry name" value="LON_N"/>
    <property type="match status" value="1"/>
</dbReference>
<dbReference type="PROSITE" id="PS51786">
    <property type="entry name" value="LON_PROTEOLYTIC"/>
    <property type="match status" value="1"/>
</dbReference>
<dbReference type="PROSITE" id="PS01046">
    <property type="entry name" value="LON_SER"/>
    <property type="match status" value="1"/>
</dbReference>
<proteinExistence type="inferred from homology"/>
<name>LONM_SCHPO</name>
<keyword id="KW-0067">ATP-binding</keyword>
<keyword id="KW-0238">DNA-binding</keyword>
<keyword id="KW-0378">Hydrolase</keyword>
<keyword id="KW-0496">Mitochondrion</keyword>
<keyword id="KW-0547">Nucleotide-binding</keyword>
<keyword id="KW-0645">Protease</keyword>
<keyword id="KW-1185">Reference proteome</keyword>
<keyword id="KW-0720">Serine protease</keyword>
<keyword id="KW-0809">Transit peptide</keyword>
<comment type="function">
    <text evidence="1">ATP-dependent serine protease that mediates the selective degradation of misfolded, unassembled or oxidatively damaged polypeptides as well as certain short-lived regulatory proteins in the mitochondrial matrix. May also have a chaperone function in the assembly of inner membrane protein complexes. Participates in the regulation of mitochondrial gene expression and in the maintenance of the integrity of the mitochondrial genome. Binds to mitochondrial DNA in a site-specific manner.</text>
</comment>
<comment type="catalytic activity">
    <reaction evidence="1">
        <text>Hydrolysis of proteins in presence of ATP.</text>
        <dbReference type="EC" id="3.4.21.53"/>
    </reaction>
</comment>
<comment type="subunit">
    <text evidence="1">Homohexamer or homoheptamer. Organized in a ring with a central cavity.</text>
</comment>
<comment type="subcellular location">
    <subcellularLocation>
        <location evidence="1 5">Mitochondrion matrix</location>
    </subcellularLocation>
</comment>
<comment type="similarity">
    <text evidence="1">Belongs to the peptidase S16 family.</text>
</comment>